<evidence type="ECO:0000255" key="1">
    <source>
        <dbReference type="HAMAP-Rule" id="MF_00101"/>
    </source>
</evidence>
<name>ACPS_ECO45</name>
<comment type="function">
    <text evidence="1">Transfers the 4'-phosphopantetheine moiety from coenzyme A to a Ser of acyl-carrier-protein.</text>
</comment>
<comment type="catalytic activity">
    <reaction evidence="1">
        <text>apo-[ACP] + CoA = holo-[ACP] + adenosine 3',5'-bisphosphate + H(+)</text>
        <dbReference type="Rhea" id="RHEA:12068"/>
        <dbReference type="Rhea" id="RHEA-COMP:9685"/>
        <dbReference type="Rhea" id="RHEA-COMP:9690"/>
        <dbReference type="ChEBI" id="CHEBI:15378"/>
        <dbReference type="ChEBI" id="CHEBI:29999"/>
        <dbReference type="ChEBI" id="CHEBI:57287"/>
        <dbReference type="ChEBI" id="CHEBI:58343"/>
        <dbReference type="ChEBI" id="CHEBI:64479"/>
        <dbReference type="EC" id="2.7.8.7"/>
    </reaction>
</comment>
<comment type="cofactor">
    <cofactor evidence="1">
        <name>Mg(2+)</name>
        <dbReference type="ChEBI" id="CHEBI:18420"/>
    </cofactor>
</comment>
<comment type="subcellular location">
    <subcellularLocation>
        <location evidence="1">Cytoplasm</location>
    </subcellularLocation>
</comment>
<comment type="similarity">
    <text evidence="1">Belongs to the P-Pant transferase superfamily. AcpS family.</text>
</comment>
<reference key="1">
    <citation type="journal article" date="2009" name="PLoS Genet.">
        <title>Organised genome dynamics in the Escherichia coli species results in highly diverse adaptive paths.</title>
        <authorList>
            <person name="Touchon M."/>
            <person name="Hoede C."/>
            <person name="Tenaillon O."/>
            <person name="Barbe V."/>
            <person name="Baeriswyl S."/>
            <person name="Bidet P."/>
            <person name="Bingen E."/>
            <person name="Bonacorsi S."/>
            <person name="Bouchier C."/>
            <person name="Bouvet O."/>
            <person name="Calteau A."/>
            <person name="Chiapello H."/>
            <person name="Clermont O."/>
            <person name="Cruveiller S."/>
            <person name="Danchin A."/>
            <person name="Diard M."/>
            <person name="Dossat C."/>
            <person name="Karoui M.E."/>
            <person name="Frapy E."/>
            <person name="Garry L."/>
            <person name="Ghigo J.M."/>
            <person name="Gilles A.M."/>
            <person name="Johnson J."/>
            <person name="Le Bouguenec C."/>
            <person name="Lescat M."/>
            <person name="Mangenot S."/>
            <person name="Martinez-Jehanne V."/>
            <person name="Matic I."/>
            <person name="Nassif X."/>
            <person name="Oztas S."/>
            <person name="Petit M.A."/>
            <person name="Pichon C."/>
            <person name="Rouy Z."/>
            <person name="Ruf C.S."/>
            <person name="Schneider D."/>
            <person name="Tourret J."/>
            <person name="Vacherie B."/>
            <person name="Vallenet D."/>
            <person name="Medigue C."/>
            <person name="Rocha E.P.C."/>
            <person name="Denamur E."/>
        </authorList>
    </citation>
    <scope>NUCLEOTIDE SEQUENCE [LARGE SCALE GENOMIC DNA]</scope>
    <source>
        <strain>S88 / ExPEC</strain>
    </source>
</reference>
<gene>
    <name evidence="1" type="primary">acpS</name>
    <name type="ordered locus">ECS88_2736</name>
</gene>
<organism>
    <name type="scientific">Escherichia coli O45:K1 (strain S88 / ExPEC)</name>
    <dbReference type="NCBI Taxonomy" id="585035"/>
    <lineage>
        <taxon>Bacteria</taxon>
        <taxon>Pseudomonadati</taxon>
        <taxon>Pseudomonadota</taxon>
        <taxon>Gammaproteobacteria</taxon>
        <taxon>Enterobacterales</taxon>
        <taxon>Enterobacteriaceae</taxon>
        <taxon>Escherichia</taxon>
    </lineage>
</organism>
<sequence>MAILGLGTDIVEIARIEAVIARSGERLARRVLSDNEWEIWKTHHQPVRFLAKRFAVKEAAAKAFGTGIRNGLAFNQFEVFNDELGKPRLRLWGEALKLAEKLGVVNMHVTLADERHYACATVIIES</sequence>
<accession>B7MIP8</accession>
<proteinExistence type="inferred from homology"/>
<feature type="chain" id="PRO_1000117348" description="Holo-[acyl-carrier-protein] synthase">
    <location>
        <begin position="1"/>
        <end position="126"/>
    </location>
</feature>
<feature type="binding site" evidence="1">
    <location>
        <position position="9"/>
    </location>
    <ligand>
        <name>Mg(2+)</name>
        <dbReference type="ChEBI" id="CHEBI:18420"/>
    </ligand>
</feature>
<feature type="binding site" evidence="1">
    <location>
        <position position="58"/>
    </location>
    <ligand>
        <name>Mg(2+)</name>
        <dbReference type="ChEBI" id="CHEBI:18420"/>
    </ligand>
</feature>
<dbReference type="EC" id="2.7.8.7" evidence="1"/>
<dbReference type="EMBL" id="CU928161">
    <property type="protein sequence ID" value="CAR04000.1"/>
    <property type="molecule type" value="Genomic_DNA"/>
</dbReference>
<dbReference type="RefSeq" id="WP_000986038.1">
    <property type="nucleotide sequence ID" value="NC_011742.1"/>
</dbReference>
<dbReference type="SMR" id="B7MIP8"/>
<dbReference type="KEGG" id="ecz:ECS88_2736"/>
<dbReference type="HOGENOM" id="CLU_089696_3_1_6"/>
<dbReference type="Proteomes" id="UP000000747">
    <property type="component" value="Chromosome"/>
</dbReference>
<dbReference type="GO" id="GO:0005737">
    <property type="term" value="C:cytoplasm"/>
    <property type="evidence" value="ECO:0007669"/>
    <property type="project" value="UniProtKB-SubCell"/>
</dbReference>
<dbReference type="GO" id="GO:0008897">
    <property type="term" value="F:holo-[acyl-carrier-protein] synthase activity"/>
    <property type="evidence" value="ECO:0007669"/>
    <property type="project" value="UniProtKB-UniRule"/>
</dbReference>
<dbReference type="GO" id="GO:0000287">
    <property type="term" value="F:magnesium ion binding"/>
    <property type="evidence" value="ECO:0007669"/>
    <property type="project" value="UniProtKB-UniRule"/>
</dbReference>
<dbReference type="GO" id="GO:0006633">
    <property type="term" value="P:fatty acid biosynthetic process"/>
    <property type="evidence" value="ECO:0007669"/>
    <property type="project" value="UniProtKB-UniRule"/>
</dbReference>
<dbReference type="FunFam" id="3.90.470.20:FF:000001">
    <property type="entry name" value="Holo-[acyl-carrier-protein] synthase"/>
    <property type="match status" value="1"/>
</dbReference>
<dbReference type="Gene3D" id="3.90.470.20">
    <property type="entry name" value="4'-phosphopantetheinyl transferase domain"/>
    <property type="match status" value="1"/>
</dbReference>
<dbReference type="HAMAP" id="MF_00101">
    <property type="entry name" value="AcpS"/>
    <property type="match status" value="1"/>
</dbReference>
<dbReference type="InterPro" id="IPR008278">
    <property type="entry name" value="4-PPantetheinyl_Trfase_dom"/>
</dbReference>
<dbReference type="InterPro" id="IPR037143">
    <property type="entry name" value="4-PPantetheinyl_Trfase_dom_sf"/>
</dbReference>
<dbReference type="InterPro" id="IPR002582">
    <property type="entry name" value="ACPS"/>
</dbReference>
<dbReference type="InterPro" id="IPR004568">
    <property type="entry name" value="Ppantetheine-prot_Trfase_dom"/>
</dbReference>
<dbReference type="NCBIfam" id="TIGR00516">
    <property type="entry name" value="acpS"/>
    <property type="match status" value="1"/>
</dbReference>
<dbReference type="NCBIfam" id="TIGR00556">
    <property type="entry name" value="pantethn_trn"/>
    <property type="match status" value="1"/>
</dbReference>
<dbReference type="Pfam" id="PF01648">
    <property type="entry name" value="ACPS"/>
    <property type="match status" value="1"/>
</dbReference>
<dbReference type="SUPFAM" id="SSF56214">
    <property type="entry name" value="4'-phosphopantetheinyl transferase"/>
    <property type="match status" value="1"/>
</dbReference>
<protein>
    <recommendedName>
        <fullName evidence="1">Holo-[acyl-carrier-protein] synthase</fullName>
        <shortName evidence="1">Holo-ACP synthase</shortName>
        <ecNumber evidence="1">2.7.8.7</ecNumber>
    </recommendedName>
    <alternativeName>
        <fullName evidence="1">4'-phosphopantetheinyl transferase AcpS</fullName>
    </alternativeName>
</protein>
<keyword id="KW-0963">Cytoplasm</keyword>
<keyword id="KW-0275">Fatty acid biosynthesis</keyword>
<keyword id="KW-0276">Fatty acid metabolism</keyword>
<keyword id="KW-0444">Lipid biosynthesis</keyword>
<keyword id="KW-0443">Lipid metabolism</keyword>
<keyword id="KW-0460">Magnesium</keyword>
<keyword id="KW-0479">Metal-binding</keyword>
<keyword id="KW-1185">Reference proteome</keyword>
<keyword id="KW-0808">Transferase</keyword>